<reference key="1">
    <citation type="journal article" date="1998" name="Science">
        <title>Genome sequence of the nematode C. elegans: a platform for investigating biology.</title>
        <authorList>
            <consortium name="The C. elegans sequencing consortium"/>
        </authorList>
    </citation>
    <scope>NUCLEOTIDE SEQUENCE [LARGE SCALE GENOMIC DNA]</scope>
    <scope>ALTERNATIVE INITIATION</scope>
    <scope>ALTERNATIVE SPLICING</scope>
    <source>
        <strain>Bristol N2</strain>
    </source>
</reference>
<evidence type="ECO:0000250" key="1"/>
<evidence type="ECO:0000250" key="2">
    <source>
        <dbReference type="UniProtKB" id="P08192"/>
    </source>
</evidence>
<evidence type="ECO:0000250" key="3">
    <source>
        <dbReference type="UniProtKB" id="Q05932"/>
    </source>
</evidence>
<evidence type="ECO:0000305" key="4"/>
<proteinExistence type="inferred from homology"/>
<accession>Q09509</accession>
<accession>Q5DX42</accession>
<accession>Q95QJ2</accession>
<dbReference type="EC" id="6.3.2.17"/>
<dbReference type="EMBL" id="FO081045">
    <property type="protein sequence ID" value="CCD68782.1"/>
    <property type="molecule type" value="Genomic_DNA"/>
</dbReference>
<dbReference type="EMBL" id="FO081045">
    <property type="protein sequence ID" value="CCD68783.1"/>
    <property type="molecule type" value="Genomic_DNA"/>
</dbReference>
<dbReference type="EMBL" id="FO081045">
    <property type="protein sequence ID" value="CCD68784.1"/>
    <property type="molecule type" value="Genomic_DNA"/>
</dbReference>
<dbReference type="PIR" id="T16146">
    <property type="entry name" value="T16146"/>
</dbReference>
<dbReference type="RefSeq" id="NP_001022548.1">
    <molecule id="Q09509-3"/>
    <property type="nucleotide sequence ID" value="NM_001027377.6"/>
</dbReference>
<dbReference type="RefSeq" id="NP_001359969.1">
    <molecule id="Q09509-1"/>
    <property type="nucleotide sequence ID" value="NM_001372603.2"/>
</dbReference>
<dbReference type="RefSeq" id="NP_498291.1">
    <molecule id="Q09509-2"/>
    <property type="nucleotide sequence ID" value="NM_065890.2"/>
</dbReference>
<dbReference type="RefSeq" id="NP_498292.1">
    <property type="nucleotide sequence ID" value="NM_065891.4"/>
</dbReference>
<dbReference type="SMR" id="Q09509"/>
<dbReference type="BioGRID" id="41063">
    <property type="interactions" value="13"/>
</dbReference>
<dbReference type="FunCoup" id="Q09509">
    <property type="interactions" value="2166"/>
</dbReference>
<dbReference type="IntAct" id="Q09509">
    <property type="interactions" value="1"/>
</dbReference>
<dbReference type="STRING" id="6239.F25B5.6b.1"/>
<dbReference type="PaxDb" id="6239-F25B5.6b"/>
<dbReference type="PeptideAtlas" id="Q09509"/>
<dbReference type="EnsemblMetazoa" id="F25B5.6a.1">
    <molecule id="Q09509-1"/>
    <property type="protein sequence ID" value="F25B5.6a.1"/>
    <property type="gene ID" value="WBGene00017777"/>
</dbReference>
<dbReference type="EnsemblMetazoa" id="F25B5.6b.1">
    <molecule id="Q09509-2"/>
    <property type="protein sequence ID" value="F25B5.6b.1"/>
    <property type="gene ID" value="WBGene00017777"/>
</dbReference>
<dbReference type="EnsemblMetazoa" id="F25B5.6c.1">
    <molecule id="Q09509-3"/>
    <property type="protein sequence ID" value="F25B5.6c.1"/>
    <property type="gene ID" value="WBGene00017777"/>
</dbReference>
<dbReference type="GeneID" id="175842"/>
<dbReference type="KEGG" id="cel:CELE_F25B5.6"/>
<dbReference type="UCSC" id="F25B5.6a">
    <property type="organism name" value="c. elegans"/>
</dbReference>
<dbReference type="AGR" id="WB:WBGene00017777"/>
<dbReference type="CTD" id="175842"/>
<dbReference type="WormBase" id="F25B5.6a">
    <molecule id="Q09509-1"/>
    <property type="protein sequence ID" value="CE01923"/>
    <property type="gene ID" value="WBGene00017777"/>
</dbReference>
<dbReference type="WormBase" id="F25B5.6b">
    <molecule id="Q09509-2"/>
    <property type="protein sequence ID" value="CE29283"/>
    <property type="gene ID" value="WBGene00017777"/>
</dbReference>
<dbReference type="WormBase" id="F25B5.6c">
    <molecule id="Q09509-3"/>
    <property type="protein sequence ID" value="CE37764"/>
    <property type="gene ID" value="WBGene00017777"/>
</dbReference>
<dbReference type="eggNOG" id="KOG2525">
    <property type="taxonomic scope" value="Eukaryota"/>
</dbReference>
<dbReference type="GeneTree" id="ENSGT00390000016526"/>
<dbReference type="InParanoid" id="Q09509"/>
<dbReference type="OMA" id="ESLDCCM"/>
<dbReference type="OrthoDB" id="5212574at2759"/>
<dbReference type="Reactome" id="R-CEL-196757">
    <property type="pathway name" value="Metabolism of folate and pterines"/>
</dbReference>
<dbReference type="UniPathway" id="UPA00850"/>
<dbReference type="PRO" id="PR:Q09509"/>
<dbReference type="Proteomes" id="UP000001940">
    <property type="component" value="Chromosome III"/>
</dbReference>
<dbReference type="Bgee" id="WBGene00017777">
    <property type="expression patterns" value="Expressed in germ line (C elegans) and 4 other cell types or tissues"/>
</dbReference>
<dbReference type="GO" id="GO:0005737">
    <property type="term" value="C:cytoplasm"/>
    <property type="evidence" value="ECO:0000318"/>
    <property type="project" value="GO_Central"/>
</dbReference>
<dbReference type="GO" id="GO:0005829">
    <property type="term" value="C:cytosol"/>
    <property type="evidence" value="ECO:0000318"/>
    <property type="project" value="GO_Central"/>
</dbReference>
<dbReference type="GO" id="GO:0005743">
    <property type="term" value="C:mitochondrial inner membrane"/>
    <property type="evidence" value="ECO:0007669"/>
    <property type="project" value="UniProtKB-SubCell"/>
</dbReference>
<dbReference type="GO" id="GO:0005759">
    <property type="term" value="C:mitochondrial matrix"/>
    <property type="evidence" value="ECO:0007669"/>
    <property type="project" value="UniProtKB-SubCell"/>
</dbReference>
<dbReference type="GO" id="GO:0005739">
    <property type="term" value="C:mitochondrion"/>
    <property type="evidence" value="ECO:0000318"/>
    <property type="project" value="GO_Central"/>
</dbReference>
<dbReference type="GO" id="GO:0005524">
    <property type="term" value="F:ATP binding"/>
    <property type="evidence" value="ECO:0007669"/>
    <property type="project" value="UniProtKB-KW"/>
</dbReference>
<dbReference type="GO" id="GO:0046872">
    <property type="term" value="F:metal ion binding"/>
    <property type="evidence" value="ECO:0007669"/>
    <property type="project" value="UniProtKB-KW"/>
</dbReference>
<dbReference type="GO" id="GO:0004326">
    <property type="term" value="F:tetrahydrofolylpolyglutamate synthase activity"/>
    <property type="evidence" value="ECO:0000318"/>
    <property type="project" value="GO_Central"/>
</dbReference>
<dbReference type="GO" id="GO:0006730">
    <property type="term" value="P:one-carbon metabolic process"/>
    <property type="evidence" value="ECO:0007669"/>
    <property type="project" value="UniProtKB-KW"/>
</dbReference>
<dbReference type="GO" id="GO:0046901">
    <property type="term" value="P:tetrahydrofolylpolyglutamate biosynthetic process"/>
    <property type="evidence" value="ECO:0000318"/>
    <property type="project" value="GO_Central"/>
</dbReference>
<dbReference type="FunFam" id="3.40.1190.10:FF:000008">
    <property type="entry name" value="Folylpolyglutamate synthase"/>
    <property type="match status" value="1"/>
</dbReference>
<dbReference type="FunFam" id="3.90.190.20:FF:000011">
    <property type="entry name" value="Folylpolyglutamate synthase"/>
    <property type="match status" value="1"/>
</dbReference>
<dbReference type="Gene3D" id="3.90.190.20">
    <property type="entry name" value="Mur ligase, C-terminal domain"/>
    <property type="match status" value="1"/>
</dbReference>
<dbReference type="Gene3D" id="3.40.1190.10">
    <property type="entry name" value="Mur-like, catalytic domain"/>
    <property type="match status" value="1"/>
</dbReference>
<dbReference type="InterPro" id="IPR001645">
    <property type="entry name" value="Folylpolyglutamate_synth"/>
</dbReference>
<dbReference type="InterPro" id="IPR018109">
    <property type="entry name" value="Folylpolyglutamate_synth_CS"/>
</dbReference>
<dbReference type="InterPro" id="IPR023600">
    <property type="entry name" value="Folylpolyglutamate_synth_euk"/>
</dbReference>
<dbReference type="InterPro" id="IPR036565">
    <property type="entry name" value="Mur-like_cat_sf"/>
</dbReference>
<dbReference type="InterPro" id="IPR036615">
    <property type="entry name" value="Mur_ligase_C_dom_sf"/>
</dbReference>
<dbReference type="NCBIfam" id="TIGR01499">
    <property type="entry name" value="folC"/>
    <property type="match status" value="1"/>
</dbReference>
<dbReference type="PANTHER" id="PTHR11136:SF5">
    <property type="entry name" value="FOLYLPOLYGLUTAMATE SYNTHASE, MITOCHONDRIAL"/>
    <property type="match status" value="1"/>
</dbReference>
<dbReference type="PANTHER" id="PTHR11136">
    <property type="entry name" value="FOLYLPOLYGLUTAMATE SYNTHASE-RELATED"/>
    <property type="match status" value="1"/>
</dbReference>
<dbReference type="PIRSF" id="PIRSF038895">
    <property type="entry name" value="FPGS"/>
    <property type="match status" value="1"/>
</dbReference>
<dbReference type="SUPFAM" id="SSF53623">
    <property type="entry name" value="MurD-like peptide ligases, catalytic domain"/>
    <property type="match status" value="1"/>
</dbReference>
<dbReference type="SUPFAM" id="SSF53244">
    <property type="entry name" value="MurD-like peptide ligases, peptide-binding domain"/>
    <property type="match status" value="1"/>
</dbReference>
<dbReference type="PROSITE" id="PS01011">
    <property type="entry name" value="FOLYLPOLYGLU_SYNT_1"/>
    <property type="match status" value="1"/>
</dbReference>
<dbReference type="PROSITE" id="PS01012">
    <property type="entry name" value="FOLYLPOLYGLU_SYNT_2"/>
    <property type="match status" value="1"/>
</dbReference>
<protein>
    <recommendedName>
        <fullName>Putative folylpolyglutamate synthase</fullName>
        <ecNumber>6.3.2.17</ecNumber>
    </recommendedName>
    <alternativeName>
        <fullName>Folylpoly-gamma-glutamate synthetase</fullName>
        <shortName>FPGS</shortName>
    </alternativeName>
    <alternativeName>
        <fullName>Tetrahydrofolylpolyglutamate synthase</fullName>
        <shortName>Tetrahydrofolate synthase</shortName>
    </alternativeName>
</protein>
<name>FOLC_CAEEL</name>
<feature type="chain" id="PRO_0000168306" description="Putative folylpolyglutamate synthase">
    <location>
        <begin position="1"/>
        <end position="510"/>
    </location>
</feature>
<feature type="binding site" evidence="2">
    <location>
        <begin position="98"/>
        <end position="101"/>
    </location>
    <ligand>
        <name>ATP</name>
        <dbReference type="ChEBI" id="CHEBI:30616"/>
    </ligand>
</feature>
<feature type="binding site" evidence="2">
    <location>
        <position position="122"/>
    </location>
    <ligand>
        <name>Mg(2+)</name>
        <dbReference type="ChEBI" id="CHEBI:18420"/>
        <label>1</label>
    </ligand>
</feature>
<feature type="binding site" evidence="2">
    <location>
        <position position="189"/>
    </location>
    <ligand>
        <name>Mg(2+)</name>
        <dbReference type="ChEBI" id="CHEBI:18420"/>
        <label>1</label>
    </ligand>
</feature>
<feature type="binding site" evidence="2">
    <location>
        <position position="217"/>
    </location>
    <ligand>
        <name>Mg(2+)</name>
        <dbReference type="ChEBI" id="CHEBI:18420"/>
        <label>2</label>
    </ligand>
</feature>
<feature type="binding site" evidence="2">
    <location>
        <position position="342"/>
    </location>
    <ligand>
        <name>ATP</name>
        <dbReference type="ChEBI" id="CHEBI:30616"/>
    </ligand>
</feature>
<feature type="binding site" evidence="2">
    <location>
        <position position="357"/>
    </location>
    <ligand>
        <name>ATP</name>
        <dbReference type="ChEBI" id="CHEBI:30616"/>
    </ligand>
</feature>
<feature type="splice variant" id="VSP_041963" description="In isoform c." evidence="4">
    <location>
        <begin position="1"/>
        <end position="26"/>
    </location>
</feature>
<feature type="splice variant" id="VSP_041964" description="In isoform b." evidence="4">
    <original>LLPQTNR</original>
    <variation>IISSIFAPTRGFHSRSTW</variation>
    <location>
        <begin position="3"/>
        <end position="9"/>
    </location>
</feature>
<comment type="function">
    <text evidence="1">Catalyzes conversion of folates to polyglutamate derivatives allowing concentration of folate compounds in the cell and the intracellular retention of these cofactors, which are important substrates for most of the folate-dependent enzymes that are involved in one-carbon transfer reactions involved in purine, pyrimidine and amino acid synthesis.</text>
</comment>
<comment type="catalytic activity">
    <reaction>
        <text>(6S)-5,6,7,8-tetrahydrofolyl-(gamma-L-Glu)(n) + L-glutamate + ATP = (6S)-5,6,7,8-tetrahydrofolyl-(gamma-L-Glu)(n+1) + ADP + phosphate + H(+)</text>
        <dbReference type="Rhea" id="RHEA:10580"/>
        <dbReference type="Rhea" id="RHEA-COMP:14738"/>
        <dbReference type="Rhea" id="RHEA-COMP:14740"/>
        <dbReference type="ChEBI" id="CHEBI:15378"/>
        <dbReference type="ChEBI" id="CHEBI:29985"/>
        <dbReference type="ChEBI" id="CHEBI:30616"/>
        <dbReference type="ChEBI" id="CHEBI:43474"/>
        <dbReference type="ChEBI" id="CHEBI:141005"/>
        <dbReference type="ChEBI" id="CHEBI:456216"/>
        <dbReference type="EC" id="6.3.2.17"/>
    </reaction>
</comment>
<comment type="cofactor">
    <cofactor evidence="1">
        <name>a monovalent cation</name>
        <dbReference type="ChEBI" id="CHEBI:60242"/>
    </cofactor>
    <text evidence="1">A monovalent cation.</text>
</comment>
<comment type="pathway">
    <text>Cofactor biosynthesis; tetrahydrofolylpolyglutamate biosynthesis.</text>
</comment>
<comment type="subcellular location">
    <subcellularLocation>
        <location evidence="3">Mitochondrion inner membrane</location>
    </subcellularLocation>
    <subcellularLocation>
        <location evidence="3">Mitochondrion matrix</location>
    </subcellularLocation>
    <subcellularLocation>
        <location evidence="3">Cytoplasm</location>
    </subcellularLocation>
</comment>
<comment type="alternative products">
    <event type="alternative splicing"/>
    <event type="alternative initiation"/>
    <isoform>
        <id>Q09509-1</id>
        <name>a</name>
        <sequence type="displayed"/>
    </isoform>
    <isoform>
        <id>Q09509-2</id>
        <name>b</name>
        <sequence type="described" ref="VSP_041964"/>
    </isoform>
    <isoform>
        <id>Q09509-3</id>
        <name>c</name>
        <sequence type="described" ref="VSP_041963"/>
    </isoform>
</comment>
<comment type="miscellaneous">
    <molecule>Isoform b</molecule>
    <text evidence="4">Produced by alternative splicing.</text>
</comment>
<comment type="miscellaneous">
    <molecule>Isoform c</molecule>
    <text evidence="4">Produced by alternative initiation at Met-27 of isoform a.</text>
</comment>
<comment type="similarity">
    <text evidence="4">Belongs to the folylpolyglutamate synthase family.</text>
</comment>
<organism>
    <name type="scientific">Caenorhabditis elegans</name>
    <dbReference type="NCBI Taxonomy" id="6239"/>
    <lineage>
        <taxon>Eukaryota</taxon>
        <taxon>Metazoa</taxon>
        <taxon>Ecdysozoa</taxon>
        <taxon>Nematoda</taxon>
        <taxon>Chromadorea</taxon>
        <taxon>Rhabditida</taxon>
        <taxon>Rhabditina</taxon>
        <taxon>Rhabditomorpha</taxon>
        <taxon>Rhabditoidea</taxon>
        <taxon>Rhabditidae</taxon>
        <taxon>Peloderinae</taxon>
        <taxon>Caenorhabditis</taxon>
    </lineage>
</organism>
<keyword id="KW-0024">Alternative initiation</keyword>
<keyword id="KW-0025">Alternative splicing</keyword>
<keyword id="KW-0067">ATP-binding</keyword>
<keyword id="KW-0963">Cytoplasm</keyword>
<keyword id="KW-0436">Ligase</keyword>
<keyword id="KW-0460">Magnesium</keyword>
<keyword id="KW-0472">Membrane</keyword>
<keyword id="KW-0479">Metal-binding</keyword>
<keyword id="KW-0496">Mitochondrion</keyword>
<keyword id="KW-0999">Mitochondrion inner membrane</keyword>
<keyword id="KW-0547">Nucleotide-binding</keyword>
<keyword id="KW-0554">One-carbon metabolism</keyword>
<keyword id="KW-1185">Reference proteome</keyword>
<sequence length="510" mass="56433">MRLLPQTNRILLPTTSSTACGANQLRMSSEKAVPCYEESVRLLNGLQSNAATIKKLRVQRENLQAINLPQCRKYLESLNISAEDLNALNIIHVSGTKGKGSACAFVESILRSQGLRTGFYSSPHLVHVRERIQVDGQPVSEQMFAEEFFHVYDIIKREHSDNMPAYFKFLTLLAFRIFVKLNVQVMILEVGIGGEYDCTNVVEKPKVCGVTTLDYDHMSILGNKLSEIAWHKAGIFKESVPAFYSPTTTEAEEVLIARAISKHVPLFQTPPVSAYQFARDISPGIRGAHQFSNVSMALQLVRAWAEKCGFPLPGVPLSTDTSGFNVPLWMCDAIESCRWPGRSQIVSTDRNVTYLLDGAHTPKSMEACSEWAAEEIVNLKKENVKKILLFQCTADRCPSTLIKYLKPLGISQIVSCPTQLHSSIDKSADSANLNASRDEQAEKANQCVQAWKESLDQPESVTEDQMKVFDCISSAYKFIESQAASQEILVLVTGSLHLVGGVLNLAGKGK</sequence>
<gene>
    <name type="ORF">F25B5.6</name>
</gene>